<name>APT_SYNR3</name>
<proteinExistence type="inferred from homology"/>
<gene>
    <name evidence="1" type="primary">apt</name>
    <name type="ordered locus">SynRCC307_0966</name>
</gene>
<feature type="chain" id="PRO_0000321417" description="Adenine phosphoribosyltransferase">
    <location>
        <begin position="1"/>
        <end position="177"/>
    </location>
</feature>
<keyword id="KW-0963">Cytoplasm</keyword>
<keyword id="KW-0328">Glycosyltransferase</keyword>
<keyword id="KW-0660">Purine salvage</keyword>
<keyword id="KW-1185">Reference proteome</keyword>
<keyword id="KW-0808">Transferase</keyword>
<comment type="function">
    <text evidence="1">Catalyzes a salvage reaction resulting in the formation of AMP, that is energically less costly than de novo synthesis.</text>
</comment>
<comment type="catalytic activity">
    <reaction evidence="1">
        <text>AMP + diphosphate = 5-phospho-alpha-D-ribose 1-diphosphate + adenine</text>
        <dbReference type="Rhea" id="RHEA:16609"/>
        <dbReference type="ChEBI" id="CHEBI:16708"/>
        <dbReference type="ChEBI" id="CHEBI:33019"/>
        <dbReference type="ChEBI" id="CHEBI:58017"/>
        <dbReference type="ChEBI" id="CHEBI:456215"/>
        <dbReference type="EC" id="2.4.2.7"/>
    </reaction>
</comment>
<comment type="pathway">
    <text evidence="1">Purine metabolism; AMP biosynthesis via salvage pathway; AMP from adenine: step 1/1.</text>
</comment>
<comment type="subunit">
    <text evidence="1">Homodimer.</text>
</comment>
<comment type="subcellular location">
    <subcellularLocation>
        <location evidence="1">Cytoplasm</location>
    </subcellularLocation>
</comment>
<comment type="similarity">
    <text evidence="1">Belongs to the purine/pyrimidine phosphoribosyltransferase family.</text>
</comment>
<protein>
    <recommendedName>
        <fullName evidence="1">Adenine phosphoribosyltransferase</fullName>
        <shortName evidence="1">APRT</shortName>
        <ecNumber evidence="1">2.4.2.7</ecNumber>
    </recommendedName>
</protein>
<dbReference type="EC" id="2.4.2.7" evidence="1"/>
<dbReference type="EMBL" id="CT978603">
    <property type="protein sequence ID" value="CAK27869.1"/>
    <property type="molecule type" value="Genomic_DNA"/>
</dbReference>
<dbReference type="SMR" id="A5GSL0"/>
<dbReference type="STRING" id="316278.SynRCC307_0966"/>
<dbReference type="KEGG" id="syr:SynRCC307_0966"/>
<dbReference type="eggNOG" id="COG0503">
    <property type="taxonomic scope" value="Bacteria"/>
</dbReference>
<dbReference type="HOGENOM" id="CLU_063339_3_3_3"/>
<dbReference type="OrthoDB" id="9803963at2"/>
<dbReference type="UniPathway" id="UPA00588">
    <property type="reaction ID" value="UER00646"/>
</dbReference>
<dbReference type="Proteomes" id="UP000001115">
    <property type="component" value="Chromosome"/>
</dbReference>
<dbReference type="GO" id="GO:0005737">
    <property type="term" value="C:cytoplasm"/>
    <property type="evidence" value="ECO:0007669"/>
    <property type="project" value="UniProtKB-SubCell"/>
</dbReference>
<dbReference type="GO" id="GO:0002055">
    <property type="term" value="F:adenine binding"/>
    <property type="evidence" value="ECO:0007669"/>
    <property type="project" value="TreeGrafter"/>
</dbReference>
<dbReference type="GO" id="GO:0003999">
    <property type="term" value="F:adenine phosphoribosyltransferase activity"/>
    <property type="evidence" value="ECO:0007669"/>
    <property type="project" value="UniProtKB-UniRule"/>
</dbReference>
<dbReference type="GO" id="GO:0016208">
    <property type="term" value="F:AMP binding"/>
    <property type="evidence" value="ECO:0007669"/>
    <property type="project" value="TreeGrafter"/>
</dbReference>
<dbReference type="GO" id="GO:0006168">
    <property type="term" value="P:adenine salvage"/>
    <property type="evidence" value="ECO:0007669"/>
    <property type="project" value="InterPro"/>
</dbReference>
<dbReference type="GO" id="GO:0044209">
    <property type="term" value="P:AMP salvage"/>
    <property type="evidence" value="ECO:0007669"/>
    <property type="project" value="UniProtKB-UniRule"/>
</dbReference>
<dbReference type="GO" id="GO:0006166">
    <property type="term" value="P:purine ribonucleoside salvage"/>
    <property type="evidence" value="ECO:0007669"/>
    <property type="project" value="UniProtKB-KW"/>
</dbReference>
<dbReference type="CDD" id="cd06223">
    <property type="entry name" value="PRTases_typeI"/>
    <property type="match status" value="1"/>
</dbReference>
<dbReference type="FunFam" id="3.40.50.2020:FF:000004">
    <property type="entry name" value="Adenine phosphoribosyltransferase"/>
    <property type="match status" value="1"/>
</dbReference>
<dbReference type="Gene3D" id="3.40.50.2020">
    <property type="match status" value="1"/>
</dbReference>
<dbReference type="HAMAP" id="MF_00004">
    <property type="entry name" value="Aden_phosphoribosyltr"/>
    <property type="match status" value="1"/>
</dbReference>
<dbReference type="InterPro" id="IPR005764">
    <property type="entry name" value="Ade_phspho_trans"/>
</dbReference>
<dbReference type="InterPro" id="IPR000836">
    <property type="entry name" value="PRibTrfase_dom"/>
</dbReference>
<dbReference type="InterPro" id="IPR029057">
    <property type="entry name" value="PRTase-like"/>
</dbReference>
<dbReference type="InterPro" id="IPR050054">
    <property type="entry name" value="UPRTase/APRTase"/>
</dbReference>
<dbReference type="NCBIfam" id="TIGR01090">
    <property type="entry name" value="apt"/>
    <property type="match status" value="1"/>
</dbReference>
<dbReference type="NCBIfam" id="NF002634">
    <property type="entry name" value="PRK02304.1-3"/>
    <property type="match status" value="1"/>
</dbReference>
<dbReference type="NCBIfam" id="NF002636">
    <property type="entry name" value="PRK02304.1-5"/>
    <property type="match status" value="1"/>
</dbReference>
<dbReference type="PANTHER" id="PTHR32315">
    <property type="entry name" value="ADENINE PHOSPHORIBOSYLTRANSFERASE"/>
    <property type="match status" value="1"/>
</dbReference>
<dbReference type="PANTHER" id="PTHR32315:SF3">
    <property type="entry name" value="ADENINE PHOSPHORIBOSYLTRANSFERASE"/>
    <property type="match status" value="1"/>
</dbReference>
<dbReference type="Pfam" id="PF00156">
    <property type="entry name" value="Pribosyltran"/>
    <property type="match status" value="1"/>
</dbReference>
<dbReference type="SUPFAM" id="SSF53271">
    <property type="entry name" value="PRTase-like"/>
    <property type="match status" value="1"/>
</dbReference>
<dbReference type="PROSITE" id="PS00103">
    <property type="entry name" value="PUR_PYR_PR_TRANSFER"/>
    <property type="match status" value="1"/>
</dbReference>
<evidence type="ECO:0000255" key="1">
    <source>
        <dbReference type="HAMAP-Rule" id="MF_00004"/>
    </source>
</evidence>
<sequence length="177" mass="18654">MAESLEQQLRALVRDVPDFPKPGILFRDLTPVMRDPQAWKQVMEGMQQSLAGLQPEVIVGIEARGFIVGTSLAMTMGLGFVPVRKPGKLPGPITAVDYALEYGSDRLEIQEGALSGCQRVLVVDDLLATGGTAAACAELVSRAGGAVCGYGFVAELTALGGRSKLPGGVLVESLIHY</sequence>
<reference key="1">
    <citation type="submission" date="2006-05" db="EMBL/GenBank/DDBJ databases">
        <authorList>
            <consortium name="Genoscope"/>
        </authorList>
    </citation>
    <scope>NUCLEOTIDE SEQUENCE [LARGE SCALE GENOMIC DNA]</scope>
    <source>
        <strain>RCC307</strain>
    </source>
</reference>
<accession>A5GSL0</accession>
<organism>
    <name type="scientific">Synechococcus sp. (strain RCC307)</name>
    <dbReference type="NCBI Taxonomy" id="316278"/>
    <lineage>
        <taxon>Bacteria</taxon>
        <taxon>Bacillati</taxon>
        <taxon>Cyanobacteriota</taxon>
        <taxon>Cyanophyceae</taxon>
        <taxon>Synechococcales</taxon>
        <taxon>Synechococcaceae</taxon>
        <taxon>Synechococcus</taxon>
    </lineage>
</organism>